<feature type="chain" id="PRO_0000150920" description="UPF0147 protein TV0625">
    <location>
        <begin position="1"/>
        <end position="89"/>
    </location>
</feature>
<gene>
    <name type="ordered locus">TV0625</name>
    <name type="ORF">TVG0617710</name>
</gene>
<protein>
    <recommendedName>
        <fullName evidence="1">UPF0147 protein TV0625</fullName>
    </recommendedName>
</protein>
<sequence length="89" mass="10005">MVMAMDQNLFNEVMYLLDELSQDTTVPKNVRKVAQDSKTKLSQENESLDLRCATVLSMLDEMANDPNVPSHGRTDLYTIISKLEALAKS</sequence>
<name>Y625_THEVO</name>
<organism>
    <name type="scientific">Thermoplasma volcanium (strain ATCC 51530 / DSM 4299 / JCM 9571 / NBRC 15438 / GSS1)</name>
    <dbReference type="NCBI Taxonomy" id="273116"/>
    <lineage>
        <taxon>Archaea</taxon>
        <taxon>Methanobacteriati</taxon>
        <taxon>Thermoplasmatota</taxon>
        <taxon>Thermoplasmata</taxon>
        <taxon>Thermoplasmatales</taxon>
        <taxon>Thermoplasmataceae</taxon>
        <taxon>Thermoplasma</taxon>
    </lineage>
</organism>
<evidence type="ECO:0000255" key="1">
    <source>
        <dbReference type="HAMAP-Rule" id="MF_00342"/>
    </source>
</evidence>
<dbReference type="EMBL" id="BA000011">
    <property type="protein sequence ID" value="BAB59767.1"/>
    <property type="molecule type" value="Genomic_DNA"/>
</dbReference>
<dbReference type="SMR" id="Q97B34"/>
<dbReference type="STRING" id="273116.gene:9381413"/>
<dbReference type="PaxDb" id="273116-14324841"/>
<dbReference type="KEGG" id="tvo:TVG0617710"/>
<dbReference type="eggNOG" id="arCOG04308">
    <property type="taxonomic scope" value="Archaea"/>
</dbReference>
<dbReference type="HOGENOM" id="CLU_165882_1_0_2"/>
<dbReference type="OrthoDB" id="65304at2157"/>
<dbReference type="PhylomeDB" id="Q97B34"/>
<dbReference type="Proteomes" id="UP000001017">
    <property type="component" value="Chromosome"/>
</dbReference>
<dbReference type="Gene3D" id="1.20.1440.50">
    <property type="entry name" value="Ta0600-like"/>
    <property type="match status" value="1"/>
</dbReference>
<dbReference type="HAMAP" id="MF_00342">
    <property type="entry name" value="UPF0147"/>
    <property type="match status" value="1"/>
</dbReference>
<dbReference type="InterPro" id="IPR023130">
    <property type="entry name" value="Ta0600-like_sf"/>
</dbReference>
<dbReference type="InterPro" id="IPR005354">
    <property type="entry name" value="UPF0147"/>
</dbReference>
<dbReference type="NCBIfam" id="NF003319">
    <property type="entry name" value="PRK04330.1"/>
    <property type="match status" value="1"/>
</dbReference>
<dbReference type="Pfam" id="PF03685">
    <property type="entry name" value="UPF0147"/>
    <property type="match status" value="1"/>
</dbReference>
<dbReference type="SUPFAM" id="SSF158436">
    <property type="entry name" value="Ta0600-like"/>
    <property type="match status" value="1"/>
</dbReference>
<reference key="1">
    <citation type="journal article" date="2000" name="Proc. Natl. Acad. Sci. U.S.A.">
        <title>Archaeal adaptation to higher temperatures revealed by genomic sequence of Thermoplasma volcanium.</title>
        <authorList>
            <person name="Kawashima T."/>
            <person name="Amano N."/>
            <person name="Koike H."/>
            <person name="Makino S."/>
            <person name="Higuchi S."/>
            <person name="Kawashima-Ohya Y."/>
            <person name="Watanabe K."/>
            <person name="Yamazaki M."/>
            <person name="Kanehori K."/>
            <person name="Kawamoto T."/>
            <person name="Nunoshiba T."/>
            <person name="Yamamoto Y."/>
            <person name="Aramaki H."/>
            <person name="Makino K."/>
            <person name="Suzuki M."/>
        </authorList>
    </citation>
    <scope>NUCLEOTIDE SEQUENCE [LARGE SCALE GENOMIC DNA]</scope>
    <source>
        <strain>ATCC 51530 / DSM 4299 / JCM 9571 / NBRC 15438 / GSS1</strain>
    </source>
</reference>
<proteinExistence type="inferred from homology"/>
<comment type="similarity">
    <text evidence="1">Belongs to the UPF0147 family.</text>
</comment>
<accession>Q97B34</accession>